<evidence type="ECO:0000255" key="1">
    <source>
        <dbReference type="HAMAP-Rule" id="MF_00003"/>
    </source>
</evidence>
<proteinExistence type="inferred from homology"/>
<keyword id="KW-0963">Cytoplasm</keyword>
<keyword id="KW-0690">Ribosome biogenesis</keyword>
<organism>
    <name type="scientific">Xylella fastidiosa (strain M23)</name>
    <dbReference type="NCBI Taxonomy" id="405441"/>
    <lineage>
        <taxon>Bacteria</taxon>
        <taxon>Pseudomonadati</taxon>
        <taxon>Pseudomonadota</taxon>
        <taxon>Gammaproteobacteria</taxon>
        <taxon>Lysobacterales</taxon>
        <taxon>Lysobacteraceae</taxon>
        <taxon>Xylella</taxon>
    </lineage>
</organism>
<accession>B2I727</accession>
<dbReference type="EMBL" id="CP001011">
    <property type="protein sequence ID" value="ACB91637.1"/>
    <property type="molecule type" value="Genomic_DNA"/>
</dbReference>
<dbReference type="RefSeq" id="WP_004572951.1">
    <property type="nucleotide sequence ID" value="NC_010577.1"/>
</dbReference>
<dbReference type="SMR" id="B2I727"/>
<dbReference type="GeneID" id="93903886"/>
<dbReference type="KEGG" id="xfn:XfasM23_0180"/>
<dbReference type="HOGENOM" id="CLU_089475_5_0_6"/>
<dbReference type="Proteomes" id="UP000001698">
    <property type="component" value="Chromosome"/>
</dbReference>
<dbReference type="GO" id="GO:0005829">
    <property type="term" value="C:cytosol"/>
    <property type="evidence" value="ECO:0007669"/>
    <property type="project" value="TreeGrafter"/>
</dbReference>
<dbReference type="GO" id="GO:0043024">
    <property type="term" value="F:ribosomal small subunit binding"/>
    <property type="evidence" value="ECO:0007669"/>
    <property type="project" value="TreeGrafter"/>
</dbReference>
<dbReference type="GO" id="GO:0030490">
    <property type="term" value="P:maturation of SSU-rRNA"/>
    <property type="evidence" value="ECO:0007669"/>
    <property type="project" value="UniProtKB-UniRule"/>
</dbReference>
<dbReference type="Gene3D" id="3.30.300.20">
    <property type="match status" value="1"/>
</dbReference>
<dbReference type="HAMAP" id="MF_00003">
    <property type="entry name" value="RbfA"/>
    <property type="match status" value="1"/>
</dbReference>
<dbReference type="InterPro" id="IPR015946">
    <property type="entry name" value="KH_dom-like_a/b"/>
</dbReference>
<dbReference type="InterPro" id="IPR000238">
    <property type="entry name" value="RbfA"/>
</dbReference>
<dbReference type="InterPro" id="IPR023799">
    <property type="entry name" value="RbfA_dom_sf"/>
</dbReference>
<dbReference type="InterPro" id="IPR020053">
    <property type="entry name" value="Ribosome-bd_factorA_CS"/>
</dbReference>
<dbReference type="NCBIfam" id="TIGR00082">
    <property type="entry name" value="rbfA"/>
    <property type="match status" value="1"/>
</dbReference>
<dbReference type="PANTHER" id="PTHR33515">
    <property type="entry name" value="RIBOSOME-BINDING FACTOR A, CHLOROPLASTIC-RELATED"/>
    <property type="match status" value="1"/>
</dbReference>
<dbReference type="PANTHER" id="PTHR33515:SF1">
    <property type="entry name" value="RIBOSOME-BINDING FACTOR A, CHLOROPLASTIC-RELATED"/>
    <property type="match status" value="1"/>
</dbReference>
<dbReference type="Pfam" id="PF02033">
    <property type="entry name" value="RBFA"/>
    <property type="match status" value="1"/>
</dbReference>
<dbReference type="SUPFAM" id="SSF89919">
    <property type="entry name" value="Ribosome-binding factor A, RbfA"/>
    <property type="match status" value="1"/>
</dbReference>
<dbReference type="PROSITE" id="PS01319">
    <property type="entry name" value="RBFA"/>
    <property type="match status" value="1"/>
</dbReference>
<protein>
    <recommendedName>
        <fullName evidence="1">Ribosome-binding factor A</fullName>
    </recommendedName>
</protein>
<name>RBFA_XYLF2</name>
<sequence length="125" mass="14176">MPKKSFQRTERISVQIRRDLGAFVQAAVRDHGLPSMSVSDVEVTRDMAHAKVFVTALQAERSFEAVAGLKALARELRMQLAQTMRLRFVPELHFHYDDSLDRGERIDTLLRDLIPPADAEKDESG</sequence>
<gene>
    <name evidence="1" type="primary">rbfA</name>
    <name type="ordered locus">XfasM23_0180</name>
</gene>
<feature type="chain" id="PRO_1000088945" description="Ribosome-binding factor A">
    <location>
        <begin position="1"/>
        <end position="125"/>
    </location>
</feature>
<reference key="1">
    <citation type="journal article" date="2010" name="J. Bacteriol.">
        <title>Whole genome sequences of two Xylella fastidiosa strains (M12 and M23) causing almond leaf scorch disease in California.</title>
        <authorList>
            <person name="Chen J."/>
            <person name="Xie G."/>
            <person name="Han S."/>
            <person name="Chertkov O."/>
            <person name="Sims D."/>
            <person name="Civerolo E.L."/>
        </authorList>
    </citation>
    <scope>NUCLEOTIDE SEQUENCE [LARGE SCALE GENOMIC DNA]</scope>
    <source>
        <strain>M23</strain>
    </source>
</reference>
<comment type="function">
    <text evidence="1">One of several proteins that assist in the late maturation steps of the functional core of the 30S ribosomal subunit. Associates with free 30S ribosomal subunits (but not with 30S subunits that are part of 70S ribosomes or polysomes). Required for efficient processing of 16S rRNA. May interact with the 5'-terminal helix region of 16S rRNA.</text>
</comment>
<comment type="subunit">
    <text evidence="1">Monomer. Binds 30S ribosomal subunits, but not 50S ribosomal subunits or 70S ribosomes.</text>
</comment>
<comment type="subcellular location">
    <subcellularLocation>
        <location evidence="1">Cytoplasm</location>
    </subcellularLocation>
</comment>
<comment type="similarity">
    <text evidence="1">Belongs to the RbfA family.</text>
</comment>